<feature type="signal peptide" evidence="1">
    <location>
        <begin position="1"/>
        <end position="15"/>
    </location>
</feature>
<feature type="chain" id="PRO_0000291446" description="Type IV secretion system putative outer membrane lipoprotein BruAb2_0058">
    <location>
        <begin position="16"/>
        <end position="172"/>
    </location>
</feature>
<feature type="domain" description="OmpA-like" evidence="2">
    <location>
        <begin position="58"/>
        <end position="172"/>
    </location>
</feature>
<feature type="lipid moiety-binding region" description="N-palmitoyl cysteine" evidence="1">
    <location>
        <position position="16"/>
    </location>
</feature>
<feature type="lipid moiety-binding region" description="S-diacylglycerol cysteine" evidence="1">
    <location>
        <position position="16"/>
    </location>
</feature>
<sequence>MRTLVMVACAVSLAACSSPPKPPTVSGRHRIPINSPAAQEELRLQVFPQEPTAQATMWPARPPKQTVNVYFPQDVTVFRPTSAQINQLHTLLWPVPKHINVRGLTDNNCPPPGDTQVARVRALAIYNWLINQGVPASRITISYAPVKDYASNAPLSPGRVLNRRVDIEILRK</sequence>
<name>YN58_BRUAB</name>
<proteinExistence type="inferred from homology"/>
<evidence type="ECO:0000255" key="1">
    <source>
        <dbReference type="PROSITE-ProRule" id="PRU00303"/>
    </source>
</evidence>
<evidence type="ECO:0000255" key="2">
    <source>
        <dbReference type="PROSITE-ProRule" id="PRU00473"/>
    </source>
</evidence>
<evidence type="ECO:0000305" key="3"/>
<protein>
    <recommendedName>
        <fullName>Type IV secretion system putative outer membrane lipoprotein BruAb2_0058</fullName>
    </recommendedName>
</protein>
<organism>
    <name type="scientific">Brucella abortus biovar 1 (strain 9-941)</name>
    <dbReference type="NCBI Taxonomy" id="262698"/>
    <lineage>
        <taxon>Bacteria</taxon>
        <taxon>Pseudomonadati</taxon>
        <taxon>Pseudomonadota</taxon>
        <taxon>Alphaproteobacteria</taxon>
        <taxon>Hyphomicrobiales</taxon>
        <taxon>Brucellaceae</taxon>
        <taxon>Brucella/Ochrobactrum group</taxon>
        <taxon>Brucella</taxon>
    </lineage>
</organism>
<dbReference type="EMBL" id="AE017224">
    <property type="protein sequence ID" value="AAX75509.1"/>
    <property type="molecule type" value="Genomic_DNA"/>
</dbReference>
<dbReference type="RefSeq" id="WP_002966521.1">
    <property type="nucleotide sequence ID" value="NC_006933.1"/>
</dbReference>
<dbReference type="SMR" id="P0C536"/>
<dbReference type="EnsemblBacteria" id="AAX75509">
    <property type="protein sequence ID" value="AAX75509"/>
    <property type="gene ID" value="BruAb2_0058"/>
</dbReference>
<dbReference type="KEGG" id="bmb:BruAb2_0058"/>
<dbReference type="HOGENOM" id="CLU_125850_0_0_5"/>
<dbReference type="Proteomes" id="UP000000540">
    <property type="component" value="Chromosome II"/>
</dbReference>
<dbReference type="GO" id="GO:0009279">
    <property type="term" value="C:cell outer membrane"/>
    <property type="evidence" value="ECO:0007669"/>
    <property type="project" value="UniProtKB-SubCell"/>
</dbReference>
<dbReference type="Gene3D" id="3.30.1330.60">
    <property type="entry name" value="OmpA-like domain"/>
    <property type="match status" value="1"/>
</dbReference>
<dbReference type="InterPro" id="IPR006665">
    <property type="entry name" value="OmpA-like"/>
</dbReference>
<dbReference type="InterPro" id="IPR036737">
    <property type="entry name" value="OmpA-like_sf"/>
</dbReference>
<dbReference type="Pfam" id="PF00691">
    <property type="entry name" value="OmpA"/>
    <property type="match status" value="1"/>
</dbReference>
<dbReference type="SUPFAM" id="SSF103088">
    <property type="entry name" value="OmpA-like"/>
    <property type="match status" value="1"/>
</dbReference>
<dbReference type="PROSITE" id="PS51123">
    <property type="entry name" value="OMPA_2"/>
    <property type="match status" value="1"/>
</dbReference>
<dbReference type="PROSITE" id="PS51257">
    <property type="entry name" value="PROKAR_LIPOPROTEIN"/>
    <property type="match status" value="1"/>
</dbReference>
<gene>
    <name type="ordered locus">BruAb2_0058</name>
</gene>
<comment type="subcellular location">
    <subcellularLocation>
        <location evidence="3">Cell outer membrane</location>
        <topology evidence="1">Lipid-anchor</topology>
    </subcellularLocation>
</comment>
<accession>P0C536</accession>
<accession>Q57A25</accession>
<accession>Q9KIS3</accession>
<keyword id="KW-0998">Cell outer membrane</keyword>
<keyword id="KW-0449">Lipoprotein</keyword>
<keyword id="KW-0472">Membrane</keyword>
<keyword id="KW-0564">Palmitate</keyword>
<keyword id="KW-0732">Signal</keyword>
<keyword id="KW-0843">Virulence</keyword>
<reference key="1">
    <citation type="journal article" date="2005" name="J. Bacteriol.">
        <title>Completion of the genome sequence of Brucella abortus and comparison to the highly similar genomes of Brucella melitensis and Brucella suis.</title>
        <authorList>
            <person name="Halling S.M."/>
            <person name="Peterson-Burch B.D."/>
            <person name="Bricker B.J."/>
            <person name="Zuerner R.L."/>
            <person name="Qing Z."/>
            <person name="Li L.-L."/>
            <person name="Kapur V."/>
            <person name="Alt D.P."/>
            <person name="Olsen S.C."/>
        </authorList>
    </citation>
    <scope>NUCLEOTIDE SEQUENCE [LARGE SCALE GENOMIC DNA]</scope>
    <source>
        <strain>9-941</strain>
    </source>
</reference>